<accession>Q9VEJ0</accession>
<accession>Q9GPQ3</accession>
<evidence type="ECO:0000250" key="1">
    <source>
        <dbReference type="UniProtKB" id="P30048"/>
    </source>
</evidence>
<evidence type="ECO:0000250" key="2">
    <source>
        <dbReference type="UniProtKB" id="P35705"/>
    </source>
</evidence>
<evidence type="ECO:0000255" key="3"/>
<evidence type="ECO:0000255" key="4">
    <source>
        <dbReference type="PROSITE-ProRule" id="PRU00691"/>
    </source>
</evidence>
<evidence type="ECO:0000269" key="5">
    <source>
    </source>
</evidence>
<evidence type="ECO:0000269" key="6">
    <source>
    </source>
</evidence>
<evidence type="ECO:0000269" key="7">
    <source>
    </source>
</evidence>
<evidence type="ECO:0000269" key="8">
    <source>
    </source>
</evidence>
<evidence type="ECO:0000269" key="9">
    <source>
    </source>
</evidence>
<evidence type="ECO:0000269" key="10">
    <source>
    </source>
</evidence>
<evidence type="ECO:0000303" key="11">
    <source>
    </source>
</evidence>
<evidence type="ECO:0000305" key="12"/>
<evidence type="ECO:0000312" key="13">
    <source>
        <dbReference type="EMBL" id="AAG41976.1"/>
    </source>
</evidence>
<evidence type="ECO:0000312" key="14">
    <source>
        <dbReference type="EMBL" id="AAO74686.1"/>
    </source>
</evidence>
<evidence type="ECO:0000312" key="15">
    <source>
        <dbReference type="FlyBase" id="FBgn0038519"/>
    </source>
</evidence>
<evidence type="ECO:0000312" key="16">
    <source>
        <dbReference type="Proteomes" id="UP000000803"/>
    </source>
</evidence>
<reference evidence="16" key="1">
    <citation type="journal article" date="2000" name="Science">
        <title>The genome sequence of Drosophila melanogaster.</title>
        <authorList>
            <person name="Adams M.D."/>
            <person name="Celniker S.E."/>
            <person name="Holt R.A."/>
            <person name="Evans C.A."/>
            <person name="Gocayne J.D."/>
            <person name="Amanatides P.G."/>
            <person name="Scherer S.E."/>
            <person name="Li P.W."/>
            <person name="Hoskins R.A."/>
            <person name="Galle R.F."/>
            <person name="George R.A."/>
            <person name="Lewis S.E."/>
            <person name="Richards S."/>
            <person name="Ashburner M."/>
            <person name="Henderson S.N."/>
            <person name="Sutton G.G."/>
            <person name="Wortman J.R."/>
            <person name="Yandell M.D."/>
            <person name="Zhang Q."/>
            <person name="Chen L.X."/>
            <person name="Brandon R.C."/>
            <person name="Rogers Y.-H.C."/>
            <person name="Blazej R.G."/>
            <person name="Champe M."/>
            <person name="Pfeiffer B.D."/>
            <person name="Wan K.H."/>
            <person name="Doyle C."/>
            <person name="Baxter E.G."/>
            <person name="Helt G."/>
            <person name="Nelson C.R."/>
            <person name="Miklos G.L.G."/>
            <person name="Abril J.F."/>
            <person name="Agbayani A."/>
            <person name="An H.-J."/>
            <person name="Andrews-Pfannkoch C."/>
            <person name="Baldwin D."/>
            <person name="Ballew R.M."/>
            <person name="Basu A."/>
            <person name="Baxendale J."/>
            <person name="Bayraktaroglu L."/>
            <person name="Beasley E.M."/>
            <person name="Beeson K.Y."/>
            <person name="Benos P.V."/>
            <person name="Berman B.P."/>
            <person name="Bhandari D."/>
            <person name="Bolshakov S."/>
            <person name="Borkova D."/>
            <person name="Botchan M.R."/>
            <person name="Bouck J."/>
            <person name="Brokstein P."/>
            <person name="Brottier P."/>
            <person name="Burtis K.C."/>
            <person name="Busam D.A."/>
            <person name="Butler H."/>
            <person name="Cadieu E."/>
            <person name="Center A."/>
            <person name="Chandra I."/>
            <person name="Cherry J.M."/>
            <person name="Cawley S."/>
            <person name="Dahlke C."/>
            <person name="Davenport L.B."/>
            <person name="Davies P."/>
            <person name="de Pablos B."/>
            <person name="Delcher A."/>
            <person name="Deng Z."/>
            <person name="Mays A.D."/>
            <person name="Dew I."/>
            <person name="Dietz S.M."/>
            <person name="Dodson K."/>
            <person name="Doup L.E."/>
            <person name="Downes M."/>
            <person name="Dugan-Rocha S."/>
            <person name="Dunkov B.C."/>
            <person name="Dunn P."/>
            <person name="Durbin K.J."/>
            <person name="Evangelista C.C."/>
            <person name="Ferraz C."/>
            <person name="Ferriera S."/>
            <person name="Fleischmann W."/>
            <person name="Fosler C."/>
            <person name="Gabrielian A.E."/>
            <person name="Garg N.S."/>
            <person name="Gelbart W.M."/>
            <person name="Glasser K."/>
            <person name="Glodek A."/>
            <person name="Gong F."/>
            <person name="Gorrell J.H."/>
            <person name="Gu Z."/>
            <person name="Guan P."/>
            <person name="Harris M."/>
            <person name="Harris N.L."/>
            <person name="Harvey D.A."/>
            <person name="Heiman T.J."/>
            <person name="Hernandez J.R."/>
            <person name="Houck J."/>
            <person name="Hostin D."/>
            <person name="Houston K.A."/>
            <person name="Howland T.J."/>
            <person name="Wei M.-H."/>
            <person name="Ibegwam C."/>
            <person name="Jalali M."/>
            <person name="Kalush F."/>
            <person name="Karpen G.H."/>
            <person name="Ke Z."/>
            <person name="Kennison J.A."/>
            <person name="Ketchum K.A."/>
            <person name="Kimmel B.E."/>
            <person name="Kodira C.D."/>
            <person name="Kraft C.L."/>
            <person name="Kravitz S."/>
            <person name="Kulp D."/>
            <person name="Lai Z."/>
            <person name="Lasko P."/>
            <person name="Lei Y."/>
            <person name="Levitsky A.A."/>
            <person name="Li J.H."/>
            <person name="Li Z."/>
            <person name="Liang Y."/>
            <person name="Lin X."/>
            <person name="Liu X."/>
            <person name="Mattei B."/>
            <person name="McIntosh T.C."/>
            <person name="McLeod M.P."/>
            <person name="McPherson D."/>
            <person name="Merkulov G."/>
            <person name="Milshina N.V."/>
            <person name="Mobarry C."/>
            <person name="Morris J."/>
            <person name="Moshrefi A."/>
            <person name="Mount S.M."/>
            <person name="Moy M."/>
            <person name="Murphy B."/>
            <person name="Murphy L."/>
            <person name="Muzny D.M."/>
            <person name="Nelson D.L."/>
            <person name="Nelson D.R."/>
            <person name="Nelson K.A."/>
            <person name="Nixon K."/>
            <person name="Nusskern D.R."/>
            <person name="Pacleb J.M."/>
            <person name="Palazzolo M."/>
            <person name="Pittman G.S."/>
            <person name="Pan S."/>
            <person name="Pollard J."/>
            <person name="Puri V."/>
            <person name="Reese M.G."/>
            <person name="Reinert K."/>
            <person name="Remington K."/>
            <person name="Saunders R.D.C."/>
            <person name="Scheeler F."/>
            <person name="Shen H."/>
            <person name="Shue B.C."/>
            <person name="Siden-Kiamos I."/>
            <person name="Simpson M."/>
            <person name="Skupski M.P."/>
            <person name="Smith T.J."/>
            <person name="Spier E."/>
            <person name="Spradling A.C."/>
            <person name="Stapleton M."/>
            <person name="Strong R."/>
            <person name="Sun E."/>
            <person name="Svirskas R."/>
            <person name="Tector C."/>
            <person name="Turner R."/>
            <person name="Venter E."/>
            <person name="Wang A.H."/>
            <person name="Wang X."/>
            <person name="Wang Z.-Y."/>
            <person name="Wassarman D.A."/>
            <person name="Weinstock G.M."/>
            <person name="Weissenbach J."/>
            <person name="Williams S.M."/>
            <person name="Woodage T."/>
            <person name="Worley K.C."/>
            <person name="Wu D."/>
            <person name="Yang S."/>
            <person name="Yao Q.A."/>
            <person name="Ye J."/>
            <person name="Yeh R.-F."/>
            <person name="Zaveri J.S."/>
            <person name="Zhan M."/>
            <person name="Zhang G."/>
            <person name="Zhao Q."/>
            <person name="Zheng L."/>
            <person name="Zheng X.H."/>
            <person name="Zhong F.N."/>
            <person name="Zhong W."/>
            <person name="Zhou X."/>
            <person name="Zhu S.C."/>
            <person name="Zhu X."/>
            <person name="Smith H.O."/>
            <person name="Gibbs R.A."/>
            <person name="Myers E.W."/>
            <person name="Rubin G.M."/>
            <person name="Venter J.C."/>
        </authorList>
    </citation>
    <scope>NUCLEOTIDE SEQUENCE [LARGE SCALE GENOMIC DNA]</scope>
    <source>
        <strain evidence="16">Berkeley</strain>
    </source>
</reference>
<reference evidence="16" key="2">
    <citation type="journal article" date="2002" name="Genome Biol.">
        <title>Annotation of the Drosophila melanogaster euchromatic genome: a systematic review.</title>
        <authorList>
            <person name="Misra S."/>
            <person name="Crosby M.A."/>
            <person name="Mungall C.J."/>
            <person name="Matthews B.B."/>
            <person name="Campbell K.S."/>
            <person name="Hradecky P."/>
            <person name="Huang Y."/>
            <person name="Kaminker J.S."/>
            <person name="Millburn G.H."/>
            <person name="Prochnik S.E."/>
            <person name="Smith C.D."/>
            <person name="Tupy J.L."/>
            <person name="Whitfield E.J."/>
            <person name="Bayraktaroglu L."/>
            <person name="Berman B.P."/>
            <person name="Bettencourt B.R."/>
            <person name="Celniker S.E."/>
            <person name="de Grey A.D.N.J."/>
            <person name="Drysdale R.A."/>
            <person name="Harris N.L."/>
            <person name="Richter J."/>
            <person name="Russo S."/>
            <person name="Schroeder A.J."/>
            <person name="Shu S.Q."/>
            <person name="Stapleton M."/>
            <person name="Yamada C."/>
            <person name="Ashburner M."/>
            <person name="Gelbart W.M."/>
            <person name="Rubin G.M."/>
            <person name="Lewis S.E."/>
        </authorList>
    </citation>
    <scope>GENOME REANNOTATION</scope>
    <source>
        <strain evidence="16">Berkeley</strain>
    </source>
</reference>
<reference evidence="13" key="3">
    <citation type="journal article" date="2001" name="Free Radic. Biol. Med.">
        <title>The peroxiredoxin gene family in Drosophila melanogaster.</title>
        <authorList>
            <person name="Radyuk S.N."/>
            <person name="Klichko V.I."/>
            <person name="Spinola B."/>
            <person name="Sohal R.S."/>
            <person name="Orr W.C."/>
        </authorList>
    </citation>
    <scope>NUCLEOTIDE SEQUENCE [MRNA]</scope>
    <scope>FUNCTION</scope>
    <scope>CATALYTIC ACTIVITY</scope>
    <scope>SUBCELLULAR LOCATION</scope>
    <scope>TISSUE SPECIFICITY</scope>
    <scope>DEVELOPMENTAL STAGE</scope>
</reference>
<reference evidence="14" key="4">
    <citation type="submission" date="2003-03" db="EMBL/GenBank/DDBJ databases">
        <authorList>
            <person name="Stapleton M."/>
            <person name="Brokstein P."/>
            <person name="Hong L."/>
            <person name="Agbayani A."/>
            <person name="Carlson J."/>
            <person name="Champe M."/>
            <person name="Chavez C."/>
            <person name="Dorsett V."/>
            <person name="Dresnek D."/>
            <person name="Farfan D."/>
            <person name="Frise E."/>
            <person name="George R."/>
            <person name="Gonzalez M."/>
            <person name="Guarin H."/>
            <person name="Kronmiller B."/>
            <person name="Li P."/>
            <person name="Liao G."/>
            <person name="Miranda A."/>
            <person name="Mungall C.J."/>
            <person name="Nunoo J."/>
            <person name="Pacleb J."/>
            <person name="Paragas V."/>
            <person name="Park S."/>
            <person name="Patel S."/>
            <person name="Phouanenavong S."/>
            <person name="Wan K."/>
            <person name="Yu C."/>
            <person name="Lewis S.E."/>
            <person name="Rubin G.M."/>
            <person name="Celniker S."/>
        </authorList>
    </citation>
    <scope>NUCLEOTIDE SEQUENCE [MRNA]</scope>
    <source>
        <strain>Berkeley</strain>
    </source>
</reference>
<reference evidence="12" key="5">
    <citation type="journal article" date="2010" name="Free Radic. Biol. Med.">
        <title>Mitochondrial peroxiredoxins are critical for the maintenance of redox state and the survival of adult Drosophila.</title>
        <authorList>
            <person name="Radyuk S.N."/>
            <person name="Rebrin I."/>
            <person name="Klichko V.I."/>
            <person name="Sohal B.H."/>
            <person name="Michalak K."/>
            <person name="Benes J."/>
            <person name="Sohal R.S."/>
            <person name="Orr W.C."/>
        </authorList>
    </citation>
    <scope>FUNCTION</scope>
    <scope>SUBCELLULAR LOCATION</scope>
    <scope>TISSUE SPECIFICITY</scope>
    <scope>DISRUPTION PHENOTYPE</scope>
</reference>
<reference evidence="12" key="6">
    <citation type="journal article" date="2012" name="Biomed. Res.">
        <title>Involvement of Prx3, a Drosophila ortholog of the thiol-dependent peroxidase PRDX3, in age-dependent oxidative stress resistance.</title>
        <authorList>
            <person name="Kayashima Y."/>
            <person name="Yamakawa-Kobayashi K."/>
        </authorList>
    </citation>
    <scope>FUNCTION</scope>
    <scope>DEVELOPMENTAL STAGE</scope>
    <scope>DISRUPTION PHENOTYPE</scope>
</reference>
<reference evidence="12" key="7">
    <citation type="journal article" date="2021" name="Brain">
        <title>Biallelic loss-of-function variations in PRDX3 cause cerebellar ataxia.</title>
        <authorList>
            <consortium name="PREPARE network"/>
            <person name="Rebelo A.P."/>
            <person name="Eidhof I."/>
            <person name="Cintra V.P."/>
            <person name="Guillot-Noel L."/>
            <person name="Pereira C.V."/>
            <person name="Timmann D."/>
            <person name="Traschuetz A."/>
            <person name="Schoels L."/>
            <person name="Coarelli G."/>
            <person name="Durr A."/>
            <person name="Anheim M."/>
            <person name="Tranchant C."/>
            <person name="van de Warrenburg B."/>
            <person name="Guissart C."/>
            <person name="Koenig M."/>
            <person name="Howell J."/>
            <person name="Moraes C.T."/>
            <person name="Schenck A."/>
            <person name="Stevanin G."/>
            <person name="Zuechner S."/>
            <person name="Synofzik M."/>
        </authorList>
    </citation>
    <scope>FUNCTION</scope>
    <scope>DISRUPTION PHENOTYPE</scope>
</reference>
<reference key="8">
    <citation type="journal article" date="2021" name="Antioxidants">
        <title>Hyperoxidation of Peroxiredoxins and Effects on Physiology of Drosophila.</title>
        <authorList>
            <person name="McGinnis A."/>
            <person name="Klichko V.I."/>
            <person name="Orr W.C."/>
            <person name="Radyuk S.N."/>
        </authorList>
    </citation>
    <scope>SUBUNIT</scope>
    <scope>TISSUE SPECIFICITY</scope>
</reference>
<reference evidence="12" key="9">
    <citation type="journal article" date="2021" name="Front. Cell Dev. Biol.">
        <title>Mitochondrial Redox Signaling Is Critical to the Normal Functioning of the Neuronal System.</title>
        <authorList>
            <person name="Odnokoz O."/>
            <person name="Nakatsuka K."/>
            <person name="Wright C."/>
            <person name="Castellanos J."/>
            <person name="Klichko V.I."/>
            <person name="Kretzschmar D."/>
            <person name="Orr W.C."/>
            <person name="Radyuk S.N."/>
        </authorList>
    </citation>
    <scope>FUNCTION</scope>
    <scope>DISRUPTION PHENOTYPE</scope>
</reference>
<name>PRDX3_DROME</name>
<keyword id="KW-0049">Antioxidant</keyword>
<keyword id="KW-1015">Disulfide bond</keyword>
<keyword id="KW-0496">Mitochondrion</keyword>
<keyword id="KW-0560">Oxidoreductase</keyword>
<keyword id="KW-0575">Peroxidase</keyword>
<keyword id="KW-0676">Redox-active center</keyword>
<keyword id="KW-1185">Reference proteome</keyword>
<keyword id="KW-0809">Transit peptide</keyword>
<dbReference type="EC" id="1.11.1.24" evidence="5"/>
<dbReference type="EMBL" id="AE014297">
    <property type="protein sequence ID" value="AAF55431.2"/>
    <property type="molecule type" value="Genomic_DNA"/>
</dbReference>
<dbReference type="EMBL" id="AF311747">
    <property type="protein sequence ID" value="AAG41976.1"/>
    <property type="molecule type" value="mRNA"/>
</dbReference>
<dbReference type="EMBL" id="BT006003">
    <property type="protein sequence ID" value="AAO74686.1"/>
    <property type="molecule type" value="mRNA"/>
</dbReference>
<dbReference type="RefSeq" id="NP_524387.1">
    <property type="nucleotide sequence ID" value="NM_079663.3"/>
</dbReference>
<dbReference type="SMR" id="Q9VEJ0"/>
<dbReference type="FunCoup" id="Q9VEJ0">
    <property type="interactions" value="1034"/>
</dbReference>
<dbReference type="IntAct" id="Q9VEJ0">
    <property type="interactions" value="3"/>
</dbReference>
<dbReference type="STRING" id="7227.FBpp0082927"/>
<dbReference type="PaxDb" id="7227-FBpp0082927"/>
<dbReference type="DNASU" id="42109"/>
<dbReference type="EnsemblMetazoa" id="FBtr0083503">
    <property type="protein sequence ID" value="FBpp0082927"/>
    <property type="gene ID" value="FBgn0038519"/>
</dbReference>
<dbReference type="GeneID" id="42109"/>
<dbReference type="KEGG" id="dme:Dmel_CG5826"/>
<dbReference type="UCSC" id="CG5826-RA">
    <property type="organism name" value="d. melanogaster"/>
</dbReference>
<dbReference type="AGR" id="FB:FBgn0038519"/>
<dbReference type="CTD" id="42109"/>
<dbReference type="FlyBase" id="FBgn0038519">
    <property type="gene designation" value="Prx3"/>
</dbReference>
<dbReference type="VEuPathDB" id="VectorBase:FBgn0038519"/>
<dbReference type="eggNOG" id="KOG0852">
    <property type="taxonomic scope" value="Eukaryota"/>
</dbReference>
<dbReference type="GeneTree" id="ENSGT00940000153430"/>
<dbReference type="HOGENOM" id="CLU_042529_21_1_1"/>
<dbReference type="InParanoid" id="Q9VEJ0"/>
<dbReference type="OMA" id="QHLYGDD"/>
<dbReference type="OrthoDB" id="185659at2759"/>
<dbReference type="Reactome" id="R-DME-3299685">
    <property type="pathway name" value="Detoxification of Reactive Oxygen Species"/>
</dbReference>
<dbReference type="BioGRID-ORCS" id="42109">
    <property type="hits" value="0 hits in 1 CRISPR screen"/>
</dbReference>
<dbReference type="GenomeRNAi" id="42109"/>
<dbReference type="PRO" id="PR:Q9VEJ0"/>
<dbReference type="Proteomes" id="UP000000803">
    <property type="component" value="Chromosome 3R"/>
</dbReference>
<dbReference type="Bgee" id="FBgn0038519">
    <property type="expression patterns" value="Expressed in adult enteroendocrine precursor cell in adult midgut (Drosophila) and 195 other cell types or tissues"/>
</dbReference>
<dbReference type="GO" id="GO:0005829">
    <property type="term" value="C:cytosol"/>
    <property type="evidence" value="ECO:0000318"/>
    <property type="project" value="GO_Central"/>
</dbReference>
<dbReference type="GO" id="GO:0005759">
    <property type="term" value="C:mitochondrial matrix"/>
    <property type="evidence" value="ECO:0000304"/>
    <property type="project" value="FlyBase"/>
</dbReference>
<dbReference type="GO" id="GO:0005739">
    <property type="term" value="C:mitochondrion"/>
    <property type="evidence" value="ECO:0000314"/>
    <property type="project" value="FlyBase"/>
</dbReference>
<dbReference type="GO" id="GO:0051920">
    <property type="term" value="F:peroxiredoxin activity"/>
    <property type="evidence" value="ECO:0000314"/>
    <property type="project" value="FlyBase"/>
</dbReference>
<dbReference type="GO" id="GO:0008379">
    <property type="term" value="F:thioredoxin peroxidase activity"/>
    <property type="evidence" value="ECO:0000318"/>
    <property type="project" value="GO_Central"/>
</dbReference>
<dbReference type="GO" id="GO:0140824">
    <property type="term" value="F:thioredoxin-dependent peroxiredoxin activity"/>
    <property type="evidence" value="ECO:0000314"/>
    <property type="project" value="FlyBase"/>
</dbReference>
<dbReference type="GO" id="GO:0045454">
    <property type="term" value="P:cell redox homeostasis"/>
    <property type="evidence" value="ECO:0000316"/>
    <property type="project" value="FlyBase"/>
</dbReference>
<dbReference type="GO" id="GO:0008340">
    <property type="term" value="P:determination of adult lifespan"/>
    <property type="evidence" value="ECO:0000316"/>
    <property type="project" value="FlyBase"/>
</dbReference>
<dbReference type="GO" id="GO:0042744">
    <property type="term" value="P:hydrogen peroxide catabolic process"/>
    <property type="evidence" value="ECO:0000314"/>
    <property type="project" value="FlyBase"/>
</dbReference>
<dbReference type="GO" id="GO:0043066">
    <property type="term" value="P:negative regulation of apoptotic process"/>
    <property type="evidence" value="ECO:0000315"/>
    <property type="project" value="FlyBase"/>
</dbReference>
<dbReference type="GO" id="GO:0006979">
    <property type="term" value="P:response to oxidative stress"/>
    <property type="evidence" value="ECO:0000318"/>
    <property type="project" value="GO_Central"/>
</dbReference>
<dbReference type="CDD" id="cd03015">
    <property type="entry name" value="PRX_Typ2cys"/>
    <property type="match status" value="1"/>
</dbReference>
<dbReference type="FunFam" id="3.40.30.10:FF:000003">
    <property type="entry name" value="Peroxiredoxin 1"/>
    <property type="match status" value="1"/>
</dbReference>
<dbReference type="Gene3D" id="3.40.30.10">
    <property type="entry name" value="Glutaredoxin"/>
    <property type="match status" value="1"/>
</dbReference>
<dbReference type="InterPro" id="IPR000866">
    <property type="entry name" value="AhpC/TSA"/>
</dbReference>
<dbReference type="InterPro" id="IPR050217">
    <property type="entry name" value="Peroxiredoxin"/>
</dbReference>
<dbReference type="InterPro" id="IPR019479">
    <property type="entry name" value="Peroxiredoxin_C"/>
</dbReference>
<dbReference type="InterPro" id="IPR036249">
    <property type="entry name" value="Thioredoxin-like_sf"/>
</dbReference>
<dbReference type="InterPro" id="IPR013766">
    <property type="entry name" value="Thioredoxin_domain"/>
</dbReference>
<dbReference type="PANTHER" id="PTHR10681">
    <property type="entry name" value="THIOREDOXIN PEROXIDASE"/>
    <property type="match status" value="1"/>
</dbReference>
<dbReference type="PANTHER" id="PTHR10681:SF128">
    <property type="entry name" value="THIOREDOXIN-DEPENDENT PEROXIDE REDUCTASE, MITOCHONDRIAL"/>
    <property type="match status" value="1"/>
</dbReference>
<dbReference type="Pfam" id="PF10417">
    <property type="entry name" value="1-cysPrx_C"/>
    <property type="match status" value="1"/>
</dbReference>
<dbReference type="Pfam" id="PF00578">
    <property type="entry name" value="AhpC-TSA"/>
    <property type="match status" value="1"/>
</dbReference>
<dbReference type="SUPFAM" id="SSF52833">
    <property type="entry name" value="Thioredoxin-like"/>
    <property type="match status" value="1"/>
</dbReference>
<dbReference type="PROSITE" id="PS51352">
    <property type="entry name" value="THIOREDOXIN_2"/>
    <property type="match status" value="1"/>
</dbReference>
<feature type="transit peptide" description="Mitochondrion" evidence="3">
    <location>
        <begin position="1"/>
        <end position="30"/>
    </location>
</feature>
<feature type="chain" id="PRO_0000457164" description="Thioredoxin-dependent peroxide reductase, mitochondrial">
    <location>
        <begin position="31"/>
        <end position="234"/>
    </location>
</feature>
<feature type="domain" description="Thioredoxin" evidence="4">
    <location>
        <begin position="40"/>
        <end position="198"/>
    </location>
</feature>
<feature type="active site" description="Cysteine sulfenic acid (-SOH) intermediate" evidence="2">
    <location>
        <position position="85"/>
    </location>
</feature>
<feature type="disulfide bond" description="Interchain (with C-206); in linked form" evidence="2">
    <location>
        <position position="85"/>
    </location>
</feature>
<feature type="disulfide bond" description="Interchain (with C-85); in linked form" evidence="2">
    <location>
        <position position="206"/>
    </location>
</feature>
<organism evidence="16">
    <name type="scientific">Drosophila melanogaster</name>
    <name type="common">Fruit fly</name>
    <dbReference type="NCBI Taxonomy" id="7227"/>
    <lineage>
        <taxon>Eukaryota</taxon>
        <taxon>Metazoa</taxon>
        <taxon>Ecdysozoa</taxon>
        <taxon>Arthropoda</taxon>
        <taxon>Hexapoda</taxon>
        <taxon>Insecta</taxon>
        <taxon>Pterygota</taxon>
        <taxon>Neoptera</taxon>
        <taxon>Endopterygota</taxon>
        <taxon>Diptera</taxon>
        <taxon>Brachycera</taxon>
        <taxon>Muscomorpha</taxon>
        <taxon>Ephydroidea</taxon>
        <taxon>Drosophilidae</taxon>
        <taxon>Drosophila</taxon>
        <taxon>Sophophora</taxon>
    </lineage>
</organism>
<gene>
    <name evidence="15" type="primary">Prx3</name>
    <name evidence="15" type="ORF">CG5826</name>
</gene>
<protein>
    <recommendedName>
        <fullName evidence="12">Thioredoxin-dependent peroxide reductase, mitochondrial</fullName>
        <ecNumber evidence="5">1.11.1.24</ecNumber>
    </recommendedName>
    <alternativeName>
        <fullName evidence="11">Peroxiredoxin 3</fullName>
    </alternativeName>
    <alternativeName>
        <fullName evidence="12">Thioredoxinperoxidase 3</fullName>
    </alternativeName>
</protein>
<sequence length="234" mass="26379">MSFVARSLIRNVPLMGKAILSQQKQIAARLLHQTAPLAAVRVQQPAPDFKGLAVVDNSFQEVKLEDYRGKYLVLFFYPLDFTFVCPTEIVAFSERIKEFHDINTEVLGVSVDSHFSHLTWCNVDRKNGGVGQLKYPLLSDLTKKISADYDVLLDKEGISLRGTFIIDPNGILRQYSINDLPVGRSVDEVLRLIKAFQFVEQHGEVCPANWNPNSNPATIKPDVEESKKYFSKHG</sequence>
<proteinExistence type="evidence at protein level"/>
<comment type="function">
    <text evidence="5 6 7 8 9">Thiol-specific peroxidase that catalyzes the reduction of hydrogen peroxide and organic hydroperoxides to water and alcohols, respectively (PubMed:11677042). Plays a role in cell protection against oxidative stress by detoxifying peroxides (PubMed:11677042, PubMed:20869434, PubMed:23124252). May be involved in aging-associated changes in the responsiveness to oxidative stress (PubMed:23124252). Involved in the maintenance of global thiol redox homeostasis (PubMed:20869434). Functions in the central nervous system (CNS) and in motor neurons and is essential for normal motor function (PubMed:33585478, PubMed:33889951).</text>
</comment>
<comment type="catalytic activity">
    <reaction evidence="5">
        <text>a hydroperoxide + [thioredoxin]-dithiol = an alcohol + [thioredoxin]-disulfide + H2O</text>
        <dbReference type="Rhea" id="RHEA:62620"/>
        <dbReference type="Rhea" id="RHEA-COMP:10698"/>
        <dbReference type="Rhea" id="RHEA-COMP:10700"/>
        <dbReference type="ChEBI" id="CHEBI:15377"/>
        <dbReference type="ChEBI" id="CHEBI:29950"/>
        <dbReference type="ChEBI" id="CHEBI:30879"/>
        <dbReference type="ChEBI" id="CHEBI:35924"/>
        <dbReference type="ChEBI" id="CHEBI:50058"/>
        <dbReference type="EC" id="1.11.1.24"/>
    </reaction>
</comment>
<comment type="subunit">
    <text evidence="1 10">Homodimer; disulfide-linked, upon oxidation (PubMed:33920774). 6 homodimers assemble to form a ring-like dodecamer (By similarity). Also exists as a monomer, however the monomeric form is present at a much lower level than the homodimeric form (PubMed:33920774).</text>
</comment>
<comment type="subcellular location">
    <subcellularLocation>
        <location evidence="5 6">Mitochondrion</location>
    </subcellularLocation>
</comment>
<comment type="tissue specificity">
    <text evidence="5 6 10">Expressed in thoracic flight muscles (at protein level) (PubMed:11677042, PubMed:20869434). Detected in the head and body (at protein level) (PubMed:33920774).</text>
</comment>
<comment type="developmental stage">
    <text evidence="5 7">High expression in embryos and adult tissues, lower expression in larval and pupal stages (PubMed:11677042). Expression levels decrease in an age-dependent manner, levels are 75% less on day 30 than on day 5 post eclosion (PubMed:23124252).</text>
</comment>
<comment type="disruption phenotype">
    <text evidence="6 7 8 9">RNAi-mediated knockdown leads to decreased lifespan, increased susceptibility to oxidative stress and an increase in apoptotic cells in the central brain (PubMed:20869434, PubMed:23124252, PubMed:33889951). Exposure of young (10-15 days old) flies to paraquat or hydrogen peroxide leads to decreased resistance to oxidants (PubMed:20869434). Reduced survival rate under oxidative stress conditions; further decrease in responsiveness to oxidative stress with age (PubMed:23124252). Affects coordinated motor behavior, such as shorter distance covered in a given time interval (15% reduction) and reduced velocity (16% reduction) compared to wild-type animals (PubMed:33889951). RNAi-mediated knockdown in neurons and glia, but not in muscles, significantly affects motor behavior (PubMed:33889951). Pan-neuronal RNAi-mediated knockdown reduces distance covered over time by 14%, with velocity during periods of moving being reduced by 13% compared to control animals (PubMed:33889951). Pan-glial RNAi-mediated knockdown reduces the distance covered by 7% and velocity during periods of moving by 8% (PubMed:33889951). RNAi-mediated knockdown in a Prx5 null mutant background leads to mean life span reduction from 55-70 days to 12.8 days and, after appearing relatively normal for the first 9-11 days after eclosion, animals undergo a very rapid increase in mortality rate (PubMed:20869434). Accelerated pro-oxidizing shift in the redox state (PubMed:20869434). Increase in the number of cells undergoing apoptosis in the thoracic muscles, digestive tract and oenocytes (PubMed:20869434). Reduction in night activity offset and age-dependent increase in temperature sensitive paralysis (PubMed:33585478). RNAi-mediated knockdown in motor neurons in a Prx5 null mutant background shortens life span and decreases negative geotaxis and phototaxis (PubMed:33585478).</text>
</comment>
<comment type="miscellaneous">
    <text evidence="1">The active site is a conserved redox-active cysteine residue, the peroxidatic cysteine (C(P)), which makes the nucleophilic attack on the peroxide substrate. The peroxide oxidizes the C(P)-SH to cysteine sulfenic acid (C(P)-SOH), which then reacts with another cysteine residue, the resolving cysteine (C(R)), to form a disulfide bridge. The disulfide is subsequently reduced by an appropriate electron donor to complete the catalytic cycle. In this typical 2-Cys peroxiredoxin, C(R) is provided by the other dimeric subunit to form an intersubunit disulfide. The disulfide is subsequently reduced by thioredoxin.</text>
</comment>
<comment type="similarity">
    <text evidence="12">Belongs to the peroxiredoxin family. AhpC/Prx1 subfamily.</text>
</comment>